<reference key="1">
    <citation type="submission" date="1997-03" db="EMBL/GenBank/DDBJ databases">
        <title>A 148 kbp sequence of the region between 35 and 47 degree of the Bacillus subtilis genome.</title>
        <authorList>
            <person name="Kasahara Y."/>
            <person name="Nakai S."/>
            <person name="Lee S."/>
            <person name="Sadaie Y."/>
            <person name="Ogasawara N."/>
        </authorList>
    </citation>
    <scope>NUCLEOTIDE SEQUENCE [GENOMIC DNA]</scope>
    <source>
        <strain>168</strain>
    </source>
</reference>
<reference key="2">
    <citation type="journal article" date="1997" name="Nature">
        <title>The complete genome sequence of the Gram-positive bacterium Bacillus subtilis.</title>
        <authorList>
            <person name="Kunst F."/>
            <person name="Ogasawara N."/>
            <person name="Moszer I."/>
            <person name="Albertini A.M."/>
            <person name="Alloni G."/>
            <person name="Azevedo V."/>
            <person name="Bertero M.G."/>
            <person name="Bessieres P."/>
            <person name="Bolotin A."/>
            <person name="Borchert S."/>
            <person name="Borriss R."/>
            <person name="Boursier L."/>
            <person name="Brans A."/>
            <person name="Braun M."/>
            <person name="Brignell S.C."/>
            <person name="Bron S."/>
            <person name="Brouillet S."/>
            <person name="Bruschi C.V."/>
            <person name="Caldwell B."/>
            <person name="Capuano V."/>
            <person name="Carter N.M."/>
            <person name="Choi S.-K."/>
            <person name="Codani J.-J."/>
            <person name="Connerton I.F."/>
            <person name="Cummings N.J."/>
            <person name="Daniel R.A."/>
            <person name="Denizot F."/>
            <person name="Devine K.M."/>
            <person name="Duesterhoeft A."/>
            <person name="Ehrlich S.D."/>
            <person name="Emmerson P.T."/>
            <person name="Entian K.-D."/>
            <person name="Errington J."/>
            <person name="Fabret C."/>
            <person name="Ferrari E."/>
            <person name="Foulger D."/>
            <person name="Fritz C."/>
            <person name="Fujita M."/>
            <person name="Fujita Y."/>
            <person name="Fuma S."/>
            <person name="Galizzi A."/>
            <person name="Galleron N."/>
            <person name="Ghim S.-Y."/>
            <person name="Glaser P."/>
            <person name="Goffeau A."/>
            <person name="Golightly E.J."/>
            <person name="Grandi G."/>
            <person name="Guiseppi G."/>
            <person name="Guy B.J."/>
            <person name="Haga K."/>
            <person name="Haiech J."/>
            <person name="Harwood C.R."/>
            <person name="Henaut A."/>
            <person name="Hilbert H."/>
            <person name="Holsappel S."/>
            <person name="Hosono S."/>
            <person name="Hullo M.-F."/>
            <person name="Itaya M."/>
            <person name="Jones L.-M."/>
            <person name="Joris B."/>
            <person name="Karamata D."/>
            <person name="Kasahara Y."/>
            <person name="Klaerr-Blanchard M."/>
            <person name="Klein C."/>
            <person name="Kobayashi Y."/>
            <person name="Koetter P."/>
            <person name="Koningstein G."/>
            <person name="Krogh S."/>
            <person name="Kumano M."/>
            <person name="Kurita K."/>
            <person name="Lapidus A."/>
            <person name="Lardinois S."/>
            <person name="Lauber J."/>
            <person name="Lazarevic V."/>
            <person name="Lee S.-M."/>
            <person name="Levine A."/>
            <person name="Liu H."/>
            <person name="Masuda S."/>
            <person name="Mauel C."/>
            <person name="Medigue C."/>
            <person name="Medina N."/>
            <person name="Mellado R.P."/>
            <person name="Mizuno M."/>
            <person name="Moestl D."/>
            <person name="Nakai S."/>
            <person name="Noback M."/>
            <person name="Noone D."/>
            <person name="O'Reilly M."/>
            <person name="Ogawa K."/>
            <person name="Ogiwara A."/>
            <person name="Oudega B."/>
            <person name="Park S.-H."/>
            <person name="Parro V."/>
            <person name="Pohl T.M."/>
            <person name="Portetelle D."/>
            <person name="Porwollik S."/>
            <person name="Prescott A.M."/>
            <person name="Presecan E."/>
            <person name="Pujic P."/>
            <person name="Purnelle B."/>
            <person name="Rapoport G."/>
            <person name="Rey M."/>
            <person name="Reynolds S."/>
            <person name="Rieger M."/>
            <person name="Rivolta C."/>
            <person name="Rocha E."/>
            <person name="Roche B."/>
            <person name="Rose M."/>
            <person name="Sadaie Y."/>
            <person name="Sato T."/>
            <person name="Scanlan E."/>
            <person name="Schleich S."/>
            <person name="Schroeter R."/>
            <person name="Scoffone F."/>
            <person name="Sekiguchi J."/>
            <person name="Sekowska A."/>
            <person name="Seror S.J."/>
            <person name="Serror P."/>
            <person name="Shin B.-S."/>
            <person name="Soldo B."/>
            <person name="Sorokin A."/>
            <person name="Tacconi E."/>
            <person name="Takagi T."/>
            <person name="Takahashi H."/>
            <person name="Takemaru K."/>
            <person name="Takeuchi M."/>
            <person name="Tamakoshi A."/>
            <person name="Tanaka T."/>
            <person name="Terpstra P."/>
            <person name="Tognoni A."/>
            <person name="Tosato V."/>
            <person name="Uchiyama S."/>
            <person name="Vandenbol M."/>
            <person name="Vannier F."/>
            <person name="Vassarotti A."/>
            <person name="Viari A."/>
            <person name="Wambutt R."/>
            <person name="Wedler E."/>
            <person name="Wedler H."/>
            <person name="Weitzenegger T."/>
            <person name="Winters P."/>
            <person name="Wipat A."/>
            <person name="Yamamoto H."/>
            <person name="Yamane K."/>
            <person name="Yasumoto K."/>
            <person name="Yata K."/>
            <person name="Yoshida K."/>
            <person name="Yoshikawa H.-F."/>
            <person name="Zumstein E."/>
            <person name="Yoshikawa H."/>
            <person name="Danchin A."/>
        </authorList>
    </citation>
    <scope>NUCLEOTIDE SEQUENCE [LARGE SCALE GENOMIC DNA]</scope>
    <source>
        <strain>168</strain>
    </source>
</reference>
<reference key="3">
    <citation type="journal article" date="2000" name="Mol. Microbiol.">
        <title>Manganese homeostasis in Bacillus subtilis is regulated by MntR, a bifunctional regulator related to the diphtheria toxin repressor family of proteins.</title>
        <authorList>
            <person name="Que Q."/>
            <person name="Helmann J.D."/>
        </authorList>
    </citation>
    <scope>FUNCTION IN MANGANESE UPTAKE</scope>
    <scope>INDUCTION</scope>
    <scope>GENE NAME</scope>
    <source>
        <strain>168</strain>
    </source>
</reference>
<organism>
    <name type="scientific">Bacillus subtilis (strain 168)</name>
    <dbReference type="NCBI Taxonomy" id="224308"/>
    <lineage>
        <taxon>Bacteria</taxon>
        <taxon>Bacillati</taxon>
        <taxon>Bacillota</taxon>
        <taxon>Bacilli</taxon>
        <taxon>Bacillales</taxon>
        <taxon>Bacillaceae</taxon>
        <taxon>Bacillus</taxon>
    </lineage>
</organism>
<comment type="function">
    <text evidence="1 2">H(+)-stimulated, divalent metal cation uptake system. Involved in manganese uptake. Can probably also transport cadmium, cobalt, copper and zinc, but not iron. May be the predominant transporter of manganese during logarithmic phase growth.</text>
</comment>
<comment type="subcellular location">
    <subcellularLocation>
        <location evidence="3">Cell membrane</location>
        <topology evidence="3">Multi-pass membrane protein</topology>
    </subcellularLocation>
</comment>
<comment type="induction">
    <text evidence="2">Repressed by MntR in the presence of manganese.</text>
</comment>
<comment type="similarity">
    <text evidence="1">Belongs to the NRAMP family.</text>
</comment>
<gene>
    <name evidence="1" type="primary">mntH</name>
    <name type="synonym">ydaR</name>
    <name type="ordered locus">BSU04360</name>
</gene>
<feature type="chain" id="PRO_0000212611" description="Divalent metal cation transporter MntH">
    <location>
        <begin position="1"/>
        <end position="425"/>
    </location>
</feature>
<feature type="transmembrane region" description="Helical" evidence="1">
    <location>
        <begin position="30"/>
        <end position="50"/>
    </location>
</feature>
<feature type="transmembrane region" description="Helical" evidence="1">
    <location>
        <begin position="61"/>
        <end position="81"/>
    </location>
</feature>
<feature type="transmembrane region" description="Helical" evidence="1">
    <location>
        <begin position="107"/>
        <end position="127"/>
    </location>
</feature>
<feature type="transmembrane region" description="Helical" evidence="1">
    <location>
        <begin position="134"/>
        <end position="154"/>
    </location>
</feature>
<feature type="transmembrane region" description="Helical" evidence="1">
    <location>
        <begin position="167"/>
        <end position="187"/>
    </location>
</feature>
<feature type="transmembrane region" description="Helical" evidence="1">
    <location>
        <begin position="209"/>
        <end position="231"/>
    </location>
</feature>
<feature type="transmembrane region" description="Helical" evidence="1">
    <location>
        <begin position="255"/>
        <end position="275"/>
    </location>
</feature>
<feature type="transmembrane region" description="Helical" evidence="1">
    <location>
        <begin position="294"/>
        <end position="314"/>
    </location>
</feature>
<feature type="transmembrane region" description="Helical" evidence="1">
    <location>
        <begin position="344"/>
        <end position="364"/>
    </location>
</feature>
<feature type="transmembrane region" description="Helical" evidence="1">
    <location>
        <begin position="365"/>
        <end position="385"/>
    </location>
</feature>
<feature type="transmembrane region" description="Helical" evidence="1">
    <location>
        <begin position="401"/>
        <end position="421"/>
    </location>
</feature>
<sequence>MMNKDITAQSPRSKAVQDALDGKIRGFRGLLPFLGPAFIAAIAYIDPGNFATNISAGSKYGYMLLWVILFSNIMALLIQSLSAKLGIATGKNLPEVAREEFPKPVSIGLWIQGELVIIATDLAEFIGAALGLYLLFGIPMLEASIIAAIGSFAILELQRRGYRSLEAGIAGMLFVVVIAFALQTFFAKPDAVSVMKGLFVPAFHGTDSVLLAAGILGATVMPHAIYLHSALTQRRVVGKTDAERKKIFRFEFIDILIAMLIAGAINASMLIVAAALFFKNGLFVEDLDVAFQQFGHLVSPMSAALFGIGLLVAGLSSSSVGTLSGDVIMQGFINYRIPLYVRRFITIIPPILIIASGVNPTTALVLSQVVLSFGIAFALIPLIMFTSNKRIMGSLINAKWITVVSWLIAVLIVALNVFLIVDTFR</sequence>
<keyword id="KW-1003">Cell membrane</keyword>
<keyword id="KW-0406">Ion transport</keyword>
<keyword id="KW-0464">Manganese</keyword>
<keyword id="KW-0472">Membrane</keyword>
<keyword id="KW-1185">Reference proteome</keyword>
<keyword id="KW-0769">Symport</keyword>
<keyword id="KW-0812">Transmembrane</keyword>
<keyword id="KW-1133">Transmembrane helix</keyword>
<keyword id="KW-0813">Transport</keyword>
<dbReference type="EMBL" id="AB001488">
    <property type="protein sequence ID" value="BAA19273.1"/>
    <property type="molecule type" value="Genomic_DNA"/>
</dbReference>
<dbReference type="EMBL" id="AL009126">
    <property type="protein sequence ID" value="CAB12243.1"/>
    <property type="molecule type" value="Genomic_DNA"/>
</dbReference>
<dbReference type="PIR" id="A69770">
    <property type="entry name" value="A69770"/>
</dbReference>
<dbReference type="RefSeq" id="NP_388317.1">
    <property type="nucleotide sequence ID" value="NC_000964.3"/>
</dbReference>
<dbReference type="RefSeq" id="WP_003234364.1">
    <property type="nucleotide sequence ID" value="NZ_OZ025638.1"/>
</dbReference>
<dbReference type="SMR" id="P96593"/>
<dbReference type="FunCoup" id="P96593">
    <property type="interactions" value="520"/>
</dbReference>
<dbReference type="IntAct" id="P96593">
    <property type="interactions" value="4"/>
</dbReference>
<dbReference type="STRING" id="224308.BSU04360"/>
<dbReference type="TCDB" id="2.A.55.3.3">
    <property type="family name" value="the metal ion (mn(2+)-iron) transporter (nramp) family"/>
</dbReference>
<dbReference type="PaxDb" id="224308-BSU04360"/>
<dbReference type="EnsemblBacteria" id="CAB12243">
    <property type="protein sequence ID" value="CAB12243"/>
    <property type="gene ID" value="BSU_04360"/>
</dbReference>
<dbReference type="GeneID" id="938241"/>
<dbReference type="KEGG" id="bsu:BSU04360"/>
<dbReference type="PATRIC" id="fig|224308.179.peg.462"/>
<dbReference type="eggNOG" id="COG1914">
    <property type="taxonomic scope" value="Bacteria"/>
</dbReference>
<dbReference type="InParanoid" id="P96593"/>
<dbReference type="OrthoDB" id="9787548at2"/>
<dbReference type="PhylomeDB" id="P96593"/>
<dbReference type="BioCyc" id="BSUB:BSU04360-MONOMER"/>
<dbReference type="Proteomes" id="UP000001570">
    <property type="component" value="Chromosome"/>
</dbReference>
<dbReference type="GO" id="GO:0005886">
    <property type="term" value="C:plasma membrane"/>
    <property type="evidence" value="ECO:0000318"/>
    <property type="project" value="GO_Central"/>
</dbReference>
<dbReference type="GO" id="GO:0015086">
    <property type="term" value="F:cadmium ion transmembrane transporter activity"/>
    <property type="evidence" value="ECO:0000318"/>
    <property type="project" value="GO_Central"/>
</dbReference>
<dbReference type="GO" id="GO:0005384">
    <property type="term" value="F:manganese ion transmembrane transporter activity"/>
    <property type="evidence" value="ECO:0000318"/>
    <property type="project" value="GO_Central"/>
</dbReference>
<dbReference type="GO" id="GO:0046872">
    <property type="term" value="F:metal ion binding"/>
    <property type="evidence" value="ECO:0007669"/>
    <property type="project" value="UniProtKB-UniRule"/>
</dbReference>
<dbReference type="GO" id="GO:0015293">
    <property type="term" value="F:symporter activity"/>
    <property type="evidence" value="ECO:0007669"/>
    <property type="project" value="UniProtKB-UniRule"/>
</dbReference>
<dbReference type="GO" id="GO:0034755">
    <property type="term" value="P:iron ion transmembrane transport"/>
    <property type="evidence" value="ECO:0000318"/>
    <property type="project" value="GO_Central"/>
</dbReference>
<dbReference type="GO" id="GO:0006828">
    <property type="term" value="P:manganese ion transport"/>
    <property type="evidence" value="ECO:0000318"/>
    <property type="project" value="GO_Central"/>
</dbReference>
<dbReference type="HAMAP" id="MF_00221">
    <property type="entry name" value="NRAMP"/>
    <property type="match status" value="1"/>
</dbReference>
<dbReference type="InterPro" id="IPR001046">
    <property type="entry name" value="NRAMP_fam"/>
</dbReference>
<dbReference type="NCBIfam" id="TIGR01197">
    <property type="entry name" value="nramp"/>
    <property type="match status" value="1"/>
</dbReference>
<dbReference type="NCBIfam" id="NF037982">
    <property type="entry name" value="Nramp_1"/>
    <property type="match status" value="1"/>
</dbReference>
<dbReference type="NCBIfam" id="NF001923">
    <property type="entry name" value="PRK00701.1"/>
    <property type="match status" value="1"/>
</dbReference>
<dbReference type="PANTHER" id="PTHR11706:SF33">
    <property type="entry name" value="NATURAL RESISTANCE-ASSOCIATED MACROPHAGE PROTEIN 2"/>
    <property type="match status" value="1"/>
</dbReference>
<dbReference type="PANTHER" id="PTHR11706">
    <property type="entry name" value="SOLUTE CARRIER PROTEIN FAMILY 11 MEMBER"/>
    <property type="match status" value="1"/>
</dbReference>
<dbReference type="Pfam" id="PF01566">
    <property type="entry name" value="Nramp"/>
    <property type="match status" value="1"/>
</dbReference>
<dbReference type="PRINTS" id="PR00447">
    <property type="entry name" value="NATRESASSCMP"/>
</dbReference>
<protein>
    <recommendedName>
        <fullName evidence="1">Divalent metal cation transporter MntH</fullName>
    </recommendedName>
</protein>
<accession>P96593</accession>
<proteinExistence type="evidence at protein level"/>
<name>MNTH_BACSU</name>
<evidence type="ECO:0000255" key="1">
    <source>
        <dbReference type="HAMAP-Rule" id="MF_00221"/>
    </source>
</evidence>
<evidence type="ECO:0000269" key="2">
    <source>
    </source>
</evidence>
<evidence type="ECO:0000305" key="3"/>